<evidence type="ECO:0000250" key="1"/>
<evidence type="ECO:0000250" key="2">
    <source>
        <dbReference type="UniProtKB" id="P01730"/>
    </source>
</evidence>
<evidence type="ECO:0000255" key="3"/>
<evidence type="ECO:0000255" key="4">
    <source>
        <dbReference type="PROSITE-ProRule" id="PRU00114"/>
    </source>
</evidence>
<proteinExistence type="evidence at transcript level"/>
<comment type="function">
    <text evidence="2">Integral membrane glycoprotein that plays an essential role in the immune response and serves multiple functions in responses against both external and internal offenses. In T-cells, functions primarily as a coreceptor for MHC class II molecule:peptide complex. The antigens presented by class II peptides are derived from extracellular proteins while class I peptides are derived from cytosolic proteins. Interacts simultaneously with the T-cell receptor (TCR) and the MHC class II presented by antigen presenting cells (APCs). In turn, recruits the Src kinase LCK to the vicinity of the TCR-CD3 complex. LCK then initiates different intracellular signaling pathways by phosphorylating various substrates ultimately leading to lymphokine production, motility, adhesion and activation of T-helper cells. In other cells such as macrophages or NK cells, plays a role in differentiation/activation, cytokine expression and cell migration in a TCR/LCK-independent pathway. Participates in the development of T-helper cells in the thymus and triggers the differentiation of monocytes into functional mature macrophages.</text>
</comment>
<comment type="subunit">
    <text evidence="2">Forms disulfide-linked homodimers at the cell surface. Interacts with LCK. Interacts with PTK2/FAK1. Binds to P4HB/PDI. Interacts with IL16; this interaction induces a CD4-dependent signaling in lymphocytes. Interacts (via Ig-like V-type domain) with MHCII alpha chain (via alpha-2 domain) and beta chain (via beta-2 domain); this interaction increases the affinity of TCR for peptide-MHCII. CD4 oligomerization via Ig-like C2-type 2 and 3 domains appears to be required for stable binding to MHCII and adhesion between T cells and APCs.</text>
</comment>
<comment type="subcellular location">
    <subcellularLocation>
        <location evidence="2">Cell membrane</location>
        <topology evidence="2">Single-pass type I membrane protein</topology>
    </subcellularLocation>
    <text evidence="2">Localizes to lipid rafts.</text>
</comment>
<comment type="domain">
    <text evidence="2">The Ig-like V-type domain mediates the interaction with MHCII.</text>
</comment>
<comment type="PTM">
    <text evidence="2">Palmitoylation and association with LCK contribute to the enrichment of CD4 in lipid rafts.</text>
</comment>
<comment type="PTM">
    <text evidence="2">Phosphorylated by PKC; phosphorylation plays an important role for CD4 internalization.</text>
</comment>
<name>CD4_CERAT</name>
<keyword id="KW-1064">Adaptive immunity</keyword>
<keyword id="KW-1003">Cell membrane</keyword>
<keyword id="KW-1015">Disulfide bond</keyword>
<keyword id="KW-0325">Glycoprotein</keyword>
<keyword id="KW-0391">Immunity</keyword>
<keyword id="KW-0393">Immunoglobulin domain</keyword>
<keyword id="KW-0449">Lipoprotein</keyword>
<keyword id="KW-0472">Membrane</keyword>
<keyword id="KW-0564">Palmitate</keyword>
<keyword id="KW-1185">Reference proteome</keyword>
<keyword id="KW-0677">Repeat</keyword>
<keyword id="KW-0812">Transmembrane</keyword>
<keyword id="KW-1133">Transmembrane helix</keyword>
<accession>Q08336</accession>
<gene>
    <name type="primary">CD4</name>
</gene>
<sequence length="397" mass="43927">VVLGKKGDTVELACNASQKKSTQFHWKNSKQIKILGNQGSFLTKGSSKLSDRADSRKSLWDQGCFSMIIKNLKIEDSETYICEVENKKEEVELLVFGLTANSDTHLLEGQSLTLTLESPPGSSPSVKCRSPRGKNIQGGRTLSVPQLERQDSGTWTCTVSQDQKTVEFKIDIVVLAFQKASSTVYKKEGEQVEFSFPLAFTLEELTGSGELWWQAERASSSKSWITFDLKNKEVSVKRVTQDPKLQMGKKLPLHLTLPQALPQYAGSGNLTLALEAKTEKLHQEVNLVVMRATQFQENLTCEVWGPTSPKLTLSLRLENKKATVSKQAKAVWVLNPEAGMWQCLLSDSGQALLESNIKVVPTWPTPVQPMALIVLGGVAGLLLFTGLGIFFCVRCRH</sequence>
<protein>
    <recommendedName>
        <fullName>T-cell surface glycoprotein CD4</fullName>
    </recommendedName>
    <alternativeName>
        <fullName>T-cell surface antigen T4/Leu-3</fullName>
    </alternativeName>
    <cdAntigenName>CD4</cdAntigenName>
</protein>
<dbReference type="EMBL" id="X73328">
    <property type="protein sequence ID" value="CAA51754.1"/>
    <property type="molecule type" value="mRNA"/>
</dbReference>
<dbReference type="EMBL" id="X73327">
    <property type="protein sequence ID" value="CAA51753.1"/>
    <property type="molecule type" value="mRNA"/>
</dbReference>
<dbReference type="SMR" id="Q08336"/>
<dbReference type="STRING" id="9531.ENSCATP00000030139"/>
<dbReference type="GlyCosmos" id="Q08336">
    <property type="glycosylation" value="3 sites, No reported glycans"/>
</dbReference>
<dbReference type="Proteomes" id="UP000233060">
    <property type="component" value="Unassembled WGS sequence"/>
</dbReference>
<dbReference type="GO" id="GO:0009986">
    <property type="term" value="C:cell surface"/>
    <property type="evidence" value="ECO:0007669"/>
    <property type="project" value="UniProtKB-ARBA"/>
</dbReference>
<dbReference type="GO" id="GO:0005886">
    <property type="term" value="C:plasma membrane"/>
    <property type="evidence" value="ECO:0007669"/>
    <property type="project" value="UniProtKB-SubCell"/>
</dbReference>
<dbReference type="GO" id="GO:0015026">
    <property type="term" value="F:coreceptor activity"/>
    <property type="evidence" value="ECO:0007669"/>
    <property type="project" value="InterPro"/>
</dbReference>
<dbReference type="GO" id="GO:0023026">
    <property type="term" value="F:MHC class II protein complex binding"/>
    <property type="evidence" value="ECO:0000250"/>
    <property type="project" value="UniProtKB"/>
</dbReference>
<dbReference type="GO" id="GO:0002250">
    <property type="term" value="P:adaptive immune response"/>
    <property type="evidence" value="ECO:0007669"/>
    <property type="project" value="UniProtKB-KW"/>
</dbReference>
<dbReference type="GO" id="GO:0007155">
    <property type="term" value="P:cell adhesion"/>
    <property type="evidence" value="ECO:0007669"/>
    <property type="project" value="InterPro"/>
</dbReference>
<dbReference type="GO" id="GO:0030217">
    <property type="term" value="P:T cell differentiation"/>
    <property type="evidence" value="ECO:0000250"/>
    <property type="project" value="UniProtKB"/>
</dbReference>
<dbReference type="GO" id="GO:0045058">
    <property type="term" value="P:T cell selection"/>
    <property type="evidence" value="ECO:0000250"/>
    <property type="project" value="UniProtKB"/>
</dbReference>
<dbReference type="CDD" id="cd07695">
    <property type="entry name" value="IgV_3_CD4"/>
    <property type="match status" value="1"/>
</dbReference>
<dbReference type="FunFam" id="2.60.40.10:FF:001105">
    <property type="entry name" value="T-cell surface glycoprotein CD4"/>
    <property type="match status" value="1"/>
</dbReference>
<dbReference type="FunFam" id="2.60.40.10:FF:001204">
    <property type="entry name" value="T-cell surface glycoprotein CD4"/>
    <property type="match status" value="1"/>
</dbReference>
<dbReference type="FunFam" id="2.60.40.10:FF:001221">
    <property type="entry name" value="T-cell surface glycoprotein CD4"/>
    <property type="match status" value="1"/>
</dbReference>
<dbReference type="FunFam" id="2.60.40.10:FF:001253">
    <property type="entry name" value="T-cell surface glycoprotein CD4"/>
    <property type="match status" value="1"/>
</dbReference>
<dbReference type="Gene3D" id="2.60.40.10">
    <property type="entry name" value="Immunoglobulins"/>
    <property type="match status" value="4"/>
</dbReference>
<dbReference type="Gene3D" id="1.20.5.900">
    <property type="entry name" value="transmembrane domain of human cd4"/>
    <property type="match status" value="1"/>
</dbReference>
<dbReference type="InterPro" id="IPR000973">
    <property type="entry name" value="CD4"/>
</dbReference>
<dbReference type="InterPro" id="IPR015274">
    <property type="entry name" value="CD4-extracel"/>
</dbReference>
<dbReference type="InterPro" id="IPR007110">
    <property type="entry name" value="Ig-like_dom"/>
</dbReference>
<dbReference type="InterPro" id="IPR036179">
    <property type="entry name" value="Ig-like_dom_sf"/>
</dbReference>
<dbReference type="InterPro" id="IPR013783">
    <property type="entry name" value="Ig-like_fold"/>
</dbReference>
<dbReference type="InterPro" id="IPR008424">
    <property type="entry name" value="Ig_C2-set"/>
</dbReference>
<dbReference type="InterPro" id="IPR003599">
    <property type="entry name" value="Ig_sub"/>
</dbReference>
<dbReference type="InterPro" id="IPR003598">
    <property type="entry name" value="Ig_sub2"/>
</dbReference>
<dbReference type="InterPro" id="IPR013106">
    <property type="entry name" value="Ig_V-set"/>
</dbReference>
<dbReference type="InterPro" id="IPR013151">
    <property type="entry name" value="Immunoglobulin_dom"/>
</dbReference>
<dbReference type="PANTHER" id="PTHR11422">
    <property type="entry name" value="T-CELL SURFACE GLYCOPROTEIN CD4"/>
    <property type="match status" value="1"/>
</dbReference>
<dbReference type="PANTHER" id="PTHR11422:SF0">
    <property type="entry name" value="T-CELL SURFACE GLYCOPROTEIN CD4"/>
    <property type="match status" value="1"/>
</dbReference>
<dbReference type="Pfam" id="PF05790">
    <property type="entry name" value="C2-set"/>
    <property type="match status" value="2"/>
</dbReference>
<dbReference type="Pfam" id="PF09191">
    <property type="entry name" value="CD4-extracel"/>
    <property type="match status" value="1"/>
</dbReference>
<dbReference type="Pfam" id="PF00047">
    <property type="entry name" value="ig"/>
    <property type="match status" value="1"/>
</dbReference>
<dbReference type="PRINTS" id="PR00692">
    <property type="entry name" value="CD4TCANTIGEN"/>
</dbReference>
<dbReference type="SMART" id="SM00409">
    <property type="entry name" value="IG"/>
    <property type="match status" value="3"/>
</dbReference>
<dbReference type="SMART" id="SM00408">
    <property type="entry name" value="IGc2"/>
    <property type="match status" value="2"/>
</dbReference>
<dbReference type="SMART" id="SM00406">
    <property type="entry name" value="IGv"/>
    <property type="match status" value="1"/>
</dbReference>
<dbReference type="SUPFAM" id="SSF48726">
    <property type="entry name" value="Immunoglobulin"/>
    <property type="match status" value="4"/>
</dbReference>
<dbReference type="PROSITE" id="PS50835">
    <property type="entry name" value="IG_LIKE"/>
    <property type="match status" value="1"/>
</dbReference>
<organism>
    <name type="scientific">Cercocebus atys</name>
    <name type="common">Sooty mangabey</name>
    <name type="synonym">Cercocebus torquatus atys</name>
    <dbReference type="NCBI Taxonomy" id="9531"/>
    <lineage>
        <taxon>Eukaryota</taxon>
        <taxon>Metazoa</taxon>
        <taxon>Chordata</taxon>
        <taxon>Craniata</taxon>
        <taxon>Vertebrata</taxon>
        <taxon>Euteleostomi</taxon>
        <taxon>Mammalia</taxon>
        <taxon>Eutheria</taxon>
        <taxon>Euarchontoglires</taxon>
        <taxon>Primates</taxon>
        <taxon>Haplorrhini</taxon>
        <taxon>Catarrhini</taxon>
        <taxon>Cercopithecidae</taxon>
        <taxon>Cercopithecinae</taxon>
        <taxon>Cercocebus</taxon>
    </lineage>
</organism>
<feature type="chain" id="PRO_0000072673" description="T-cell surface glycoprotein CD4">
    <location>
        <begin position="1" status="less than"/>
        <end position="397" status="greater than"/>
    </location>
</feature>
<feature type="topological domain" description="Extracellular" evidence="3">
    <location>
        <begin position="1" status="less than"/>
        <end position="369"/>
    </location>
</feature>
<feature type="transmembrane region" description="Helical" evidence="3">
    <location>
        <begin position="370"/>
        <end position="391"/>
    </location>
</feature>
<feature type="topological domain" description="Cytoplasmic" evidence="3">
    <location>
        <begin position="392"/>
        <end position="397" status="greater than"/>
    </location>
</feature>
<feature type="domain" description="Ig-like V-type">
    <location>
        <begin position="1" status="less than"/>
        <end position="98"/>
    </location>
</feature>
<feature type="domain" description="Ig-like C2-type 1">
    <location>
        <begin position="99"/>
        <end position="176"/>
    </location>
</feature>
<feature type="domain" description="Ig-like C2-type 2">
    <location>
        <begin position="177"/>
        <end position="290"/>
    </location>
</feature>
<feature type="domain" description="Ig-like C2-type 3">
    <location>
        <begin position="291"/>
        <end position="347"/>
    </location>
</feature>
<feature type="lipid moiety-binding region" description="S-palmitoyl cysteine" evidence="1">
    <location>
        <position position="392"/>
    </location>
</feature>
<feature type="lipid moiety-binding region" description="S-palmitoyl cysteine" evidence="1">
    <location>
        <position position="395"/>
    </location>
</feature>
<feature type="glycosylation site" description="N-linked (GlcNAc...) asparagine" evidence="3">
    <location>
        <position position="15"/>
    </location>
</feature>
<feature type="glycosylation site" description="N-linked (GlcNAc...) asparagine" evidence="3">
    <location>
        <position position="269"/>
    </location>
</feature>
<feature type="glycosylation site" description="N-linked (GlcNAc...) asparagine" evidence="3">
    <location>
        <position position="298"/>
    </location>
</feature>
<feature type="disulfide bond" evidence="4">
    <location>
        <begin position="14"/>
        <end position="82"/>
    </location>
</feature>
<feature type="disulfide bond" evidence="4">
    <location>
        <begin position="128"/>
        <end position="157"/>
    </location>
</feature>
<feature type="disulfide bond" evidence="4">
    <location>
        <begin position="301"/>
        <end position="343"/>
    </location>
</feature>
<feature type="sequence variant">
    <location>
        <position position="20"/>
    </location>
</feature>
<feature type="sequence variant">
    <original>T</original>
    <variation>I</variation>
    <location>
        <position position="43"/>
    </location>
</feature>
<feature type="sequence variant">
    <original>N</original>
    <variation>D</variation>
    <location>
        <position position="86"/>
    </location>
</feature>
<feature type="sequence variant">
    <original>F</original>
    <variation>L</variation>
    <location>
        <position position="96"/>
    </location>
</feature>
<feature type="sequence variant">
    <original>V</original>
    <variation>M</variation>
    <location>
        <position position="173"/>
    </location>
</feature>
<feature type="sequence variant">
    <original>R</original>
    <variation>K</variation>
    <location>
        <position position="316"/>
    </location>
</feature>
<feature type="non-terminal residue">
    <location>
        <position position="1"/>
    </location>
</feature>
<feature type="non-terminal residue">
    <location>
        <position position="397"/>
    </location>
</feature>
<reference key="1">
    <citation type="journal article" date="1992" name="Eur. J. Immunol.">
        <title>Cloning and sequences of primate CD4 molecules: diversity of the cellular receptor for simian immunodeficiency virus/human immunodeficiency virus.</title>
        <authorList>
            <person name="Fomsgaard A."/>
            <person name="Hirsch V.M."/>
            <person name="Johnson P.R."/>
        </authorList>
    </citation>
    <scope>NUCLEOTIDE SEQUENCE [MRNA]</scope>
    <source>
        <tissue>Blood</tissue>
    </source>
</reference>